<dbReference type="EMBL" id="CP001978">
    <property type="protein sequence ID" value="ADP97260.1"/>
    <property type="molecule type" value="Genomic_DNA"/>
</dbReference>
<dbReference type="RefSeq" id="WP_014576907.1">
    <property type="nucleotide sequence ID" value="NC_017506.1"/>
</dbReference>
<dbReference type="SMR" id="E4PKG3"/>
<dbReference type="STRING" id="225937.HP15_1496"/>
<dbReference type="KEGG" id="mad:HP15_1496"/>
<dbReference type="PATRIC" id="fig|225937.3.peg.1502"/>
<dbReference type="eggNOG" id="COG1520">
    <property type="taxonomic scope" value="Bacteria"/>
</dbReference>
<dbReference type="HOGENOM" id="CLU_027480_0_1_6"/>
<dbReference type="Proteomes" id="UP000007077">
    <property type="component" value="Chromosome"/>
</dbReference>
<dbReference type="GO" id="GO:0009279">
    <property type="term" value="C:cell outer membrane"/>
    <property type="evidence" value="ECO:0007669"/>
    <property type="project" value="UniProtKB-SubCell"/>
</dbReference>
<dbReference type="GO" id="GO:0043165">
    <property type="term" value="P:Gram-negative-bacterium-type cell outer membrane assembly"/>
    <property type="evidence" value="ECO:0007669"/>
    <property type="project" value="UniProtKB-UniRule"/>
</dbReference>
<dbReference type="GO" id="GO:0051205">
    <property type="term" value="P:protein insertion into membrane"/>
    <property type="evidence" value="ECO:0007669"/>
    <property type="project" value="UniProtKB-UniRule"/>
</dbReference>
<dbReference type="Gene3D" id="2.130.10.10">
    <property type="entry name" value="YVTN repeat-like/Quinoprotein amine dehydrogenase"/>
    <property type="match status" value="1"/>
</dbReference>
<dbReference type="HAMAP" id="MF_00923">
    <property type="entry name" value="OM_assembly_BamB"/>
    <property type="match status" value="1"/>
</dbReference>
<dbReference type="InterPro" id="IPR017687">
    <property type="entry name" value="BamB"/>
</dbReference>
<dbReference type="InterPro" id="IPR018391">
    <property type="entry name" value="PQQ_b-propeller_rpt"/>
</dbReference>
<dbReference type="InterPro" id="IPR002372">
    <property type="entry name" value="PQQ_rpt_dom"/>
</dbReference>
<dbReference type="InterPro" id="IPR011047">
    <property type="entry name" value="Quinoprotein_ADH-like_sf"/>
</dbReference>
<dbReference type="InterPro" id="IPR015943">
    <property type="entry name" value="WD40/YVTN_repeat-like_dom_sf"/>
</dbReference>
<dbReference type="NCBIfam" id="TIGR03300">
    <property type="entry name" value="assembly_YfgL"/>
    <property type="match status" value="1"/>
</dbReference>
<dbReference type="PANTHER" id="PTHR34512">
    <property type="entry name" value="CELL SURFACE PROTEIN"/>
    <property type="match status" value="1"/>
</dbReference>
<dbReference type="PANTHER" id="PTHR34512:SF30">
    <property type="entry name" value="OUTER MEMBRANE PROTEIN ASSEMBLY FACTOR BAMB"/>
    <property type="match status" value="1"/>
</dbReference>
<dbReference type="Pfam" id="PF13360">
    <property type="entry name" value="PQQ_2"/>
    <property type="match status" value="1"/>
</dbReference>
<dbReference type="SMART" id="SM00564">
    <property type="entry name" value="PQQ"/>
    <property type="match status" value="7"/>
</dbReference>
<dbReference type="SUPFAM" id="SSF50998">
    <property type="entry name" value="Quinoprotein alcohol dehydrogenase-like"/>
    <property type="match status" value="1"/>
</dbReference>
<comment type="function">
    <text evidence="1">Part of the outer membrane protein assembly complex, which is involved in assembly and insertion of beta-barrel proteins into the outer membrane.</text>
</comment>
<comment type="subunit">
    <text evidence="1">Part of the Bam complex.</text>
</comment>
<comment type="subcellular location">
    <subcellularLocation>
        <location evidence="1">Cell outer membrane</location>
        <topology evidence="1">Lipid-anchor</topology>
    </subcellularLocation>
</comment>
<comment type="similarity">
    <text evidence="1">Belongs to the BamB family.</text>
</comment>
<protein>
    <recommendedName>
        <fullName evidence="1">Outer membrane protein assembly factor BamB</fullName>
    </recommendedName>
</protein>
<gene>
    <name evidence="1" type="primary">bamB</name>
    <name type="ordered locus">HP15_1496</name>
</gene>
<feature type="signal peptide" evidence="1">
    <location>
        <begin position="1"/>
        <end position="25"/>
    </location>
</feature>
<feature type="chain" id="PRO_0000417682" description="Outer membrane protein assembly factor BamB">
    <location>
        <begin position="26"/>
        <end position="390"/>
    </location>
</feature>
<feature type="lipid moiety-binding region" description="N-palmitoyl cysteine" evidence="1">
    <location>
        <position position="26"/>
    </location>
</feature>
<feature type="lipid moiety-binding region" description="S-diacylglycerol cysteine" evidence="1">
    <location>
        <position position="26"/>
    </location>
</feature>
<proteinExistence type="inferred from homology"/>
<keyword id="KW-0998">Cell outer membrane</keyword>
<keyword id="KW-0449">Lipoprotein</keyword>
<keyword id="KW-0472">Membrane</keyword>
<keyword id="KW-0564">Palmitate</keyword>
<keyword id="KW-0732">Signal</keyword>
<name>BAMB_MARAH</name>
<accession>E4PKG3</accession>
<reference key="1">
    <citation type="submission" date="2010-02" db="EMBL/GenBank/DDBJ databases">
        <title>Complete genome sequence of Marinobacter adhaerens type strain (HP15).</title>
        <authorList>
            <person name="Gaerdes A.A.M."/>
            <person name="Kaeppel E."/>
            <person name="Shezad A."/>
            <person name="Seebah S."/>
            <person name="Teeling H."/>
            <person name="Yarza P."/>
            <person name="Gloeckner F.O."/>
            <person name="Ullrich M.S."/>
        </authorList>
    </citation>
    <scope>NUCLEOTIDE SEQUENCE [LARGE SCALE GENOMIC DNA]</scope>
    <source>
        <strain>DSM 23420 / HP15</strain>
    </source>
</reference>
<organism>
    <name type="scientific">Marinobacter adhaerens (strain DSM 23420 / HP15)</name>
    <dbReference type="NCBI Taxonomy" id="225937"/>
    <lineage>
        <taxon>Bacteria</taxon>
        <taxon>Pseudomonadati</taxon>
        <taxon>Pseudomonadota</taxon>
        <taxon>Gammaproteobacteria</taxon>
        <taxon>Pseudomonadales</taxon>
        <taxon>Marinobacteraceae</taxon>
        <taxon>Marinobacter</taxon>
    </lineage>
</organism>
<sequence length="390" mass="42166">MPVLRDRIPRRGFFLGLALLAALSGCSSTDTFEQPVPVPEIEASVEFERVWSMSVGDGHDGDFLYLAPLVTGDLIYAASADGELYAVATETGEVAWESEFEDRIFSGLGGDGQNLYLTTENADLVALSREDGSEVWRTSLPTEVLSSPQSNGSLVVAQTTDGKVLGFSATDGEKLWQYDGSVPVLSMRAAAAPLVGGDVVIASFASGKLIALTAASGQPMWQYEVGQPQGRTELERLVDVTGQPLVIETAVMVVGYQGKLALVDIRTGQEIWSRKASSLYSPMIGGGQIYLAAADGEIIALRGSDRREVWTQDRLAWRQLTQPMVYEDYLVVGDFEGYLHALDREDGSLVGQREFDDEGIRVPAQRLANGNLLVFGNSGKMAVFQVKPQD</sequence>
<evidence type="ECO:0000255" key="1">
    <source>
        <dbReference type="HAMAP-Rule" id="MF_00923"/>
    </source>
</evidence>